<feature type="chain" id="PRO_0000379285" description="ATP-dependent helicase/nuclease subunit A">
    <location>
        <begin position="1"/>
        <end position="1249"/>
    </location>
</feature>
<feature type="domain" description="UvrD-like helicase ATP-binding" evidence="1">
    <location>
        <begin position="5"/>
        <end position="482"/>
    </location>
</feature>
<feature type="domain" description="UvrD-like helicase C-terminal" evidence="1">
    <location>
        <begin position="521"/>
        <end position="811"/>
    </location>
</feature>
<feature type="binding site" evidence="1">
    <location>
        <begin position="26"/>
        <end position="33"/>
    </location>
    <ligand>
        <name>ATP</name>
        <dbReference type="ChEBI" id="CHEBI:30616"/>
    </ligand>
</feature>
<gene>
    <name evidence="1" type="primary">addA</name>
    <name type="synonym">rexA</name>
    <name type="ordered locus">lp_2693</name>
</gene>
<proteinExistence type="inferred from homology"/>
<organism>
    <name type="scientific">Lactiplantibacillus plantarum (strain ATCC BAA-793 / NCIMB 8826 / WCFS1)</name>
    <name type="common">Lactobacillus plantarum</name>
    <dbReference type="NCBI Taxonomy" id="220668"/>
    <lineage>
        <taxon>Bacteria</taxon>
        <taxon>Bacillati</taxon>
        <taxon>Bacillota</taxon>
        <taxon>Bacilli</taxon>
        <taxon>Lactobacillales</taxon>
        <taxon>Lactobacillaceae</taxon>
        <taxon>Lactiplantibacillus</taxon>
    </lineage>
</organism>
<protein>
    <recommendedName>
        <fullName evidence="1">ATP-dependent helicase/nuclease subunit A</fullName>
        <ecNumber evidence="1">3.1.-.-</ecNumber>
        <ecNumber evidence="1">5.6.2.4</ecNumber>
    </recommendedName>
    <alternativeName>
        <fullName evidence="1">ATP-dependent helicase/nuclease AddA</fullName>
    </alternativeName>
    <alternativeName>
        <fullName evidence="1">DNA 3'-5' helicase AddA</fullName>
    </alternativeName>
</protein>
<comment type="function">
    <text evidence="1">The heterodimer acts as both an ATP-dependent DNA helicase and an ATP-dependent, dual-direction single-stranded exonuclease. Recognizes the chi site generating a DNA molecule suitable for the initiation of homologous recombination. The AddA nuclease domain is required for chi fragment generation; this subunit has the helicase and 3' -&gt; 5' nuclease activities.</text>
</comment>
<comment type="catalytic activity">
    <reaction evidence="1">
        <text>Couples ATP hydrolysis with the unwinding of duplex DNA by translocating in the 3'-5' direction.</text>
        <dbReference type="EC" id="5.6.2.4"/>
    </reaction>
</comment>
<comment type="catalytic activity">
    <reaction evidence="1">
        <text>ATP + H2O = ADP + phosphate + H(+)</text>
        <dbReference type="Rhea" id="RHEA:13065"/>
        <dbReference type="ChEBI" id="CHEBI:15377"/>
        <dbReference type="ChEBI" id="CHEBI:15378"/>
        <dbReference type="ChEBI" id="CHEBI:30616"/>
        <dbReference type="ChEBI" id="CHEBI:43474"/>
        <dbReference type="ChEBI" id="CHEBI:456216"/>
        <dbReference type="EC" id="5.6.2.4"/>
    </reaction>
</comment>
<comment type="cofactor">
    <cofactor evidence="1">
        <name>Mg(2+)</name>
        <dbReference type="ChEBI" id="CHEBI:18420"/>
    </cofactor>
</comment>
<comment type="subunit">
    <text evidence="1">Heterodimer of AddA and AddB/RexB.</text>
</comment>
<comment type="similarity">
    <text evidence="1">Belongs to the helicase family. AddA subfamily.</text>
</comment>
<keyword id="KW-0067">ATP-binding</keyword>
<keyword id="KW-0227">DNA damage</keyword>
<keyword id="KW-0234">DNA repair</keyword>
<keyword id="KW-0238">DNA-binding</keyword>
<keyword id="KW-0269">Exonuclease</keyword>
<keyword id="KW-0347">Helicase</keyword>
<keyword id="KW-0378">Hydrolase</keyword>
<keyword id="KW-0413">Isomerase</keyword>
<keyword id="KW-0540">Nuclease</keyword>
<keyword id="KW-0547">Nucleotide-binding</keyword>
<keyword id="KW-1185">Reference proteome</keyword>
<sequence length="1249" mass="141029">MSEGTNYTPSQQAVIAQQGNNLLVSASAGSGKTTVLIERIMRKILAGTNIDQLLVVTFTNLAAKHMKQKLESQINKRISQLMTDNPAQTTASPAIRQLRQQLNLLGVANISTLDAFCLRVIQRYYYVIDLDPVFRLLTDNTEGLLIRDQVWDSVREQLYDEDGTLFDLLTANFSNDRSDDGLSRLIFRLFDFAQSTPDPEGWLSKLPEPYQVDEEALTASAFYQQQLLPLLINEVDGMQMKLRQAQKVATDADLVPKTLEVLATAQKTLTTLREQLATASWNELRTQVATFKIGALKKTYKDEPEKTARAKTMGTFVDGVKKQMTTLSETYFAADEQQVLDIMVGAKSIVTELVDATKQFKTAFAAEKRRRHVLDFSDLEHLTLQILTSDNESSQAALAQLRAQFEEVMVDEYQDINSLQESILQLLARDQPGNMFMVGDVKQSIYQFRLADPLLFLHKYHDFGTNPEHGERIVLAENFRSVANVDHLTNLIFSQLMDAPVGQIDYDEAAYLKYGPKDYPADMPQTTNLLLYQTETDKSTEDVSTDETNFSIDDPAVGSITMVAQKILALKAQDKPIYERANGEYRPFRYSDVALLVPTRNHNLTIIDVFKRYHIPVVVNDAQNYFQTTEIRIMMALLSIIDNPYQDIPLVAVLRSPIVGLDENQLVYLRIQNKTSDYFQAVQDFYHHYPTGPATEYGDQVYAKIETFLTQLTEFRDLARRNQIVTLIWQIYERTGFLDYVGGMPAGKQRQANLHALYERAYTYEQGSFKGLFQFVRFIRRMQEKDQDLAAAVAETDAEAVNVMTIHGSKGLEYPVIFVMDMDKQFNQTDTRSSALLDREAGIGITYLDPETRVKYPTLPQVVTKQVVSKKMRAEEMRKLYVAMTRAQQQLYLVGTIKDIDTATEKWRQAFASDGRVLSAQARIAATNQLDWVGMAVMRHPAMKAYWGDEWPNYELTDDPTKLAVELGDATTVLAEQSEAVTDTQPDALELVEQQVTIDVDQVTRDYLTTLLNFHYPHQASTTTTAYQSVSEVKRIFEDPDTPLMNANPTVSQRRSRPTSRFVTGSLELPQFLQTTQAPTSAEVGSATHLVLEQLDLTKPVNETTVQSTIDGLVANRVLTTNVAKLIAVDTIVAFYQSALGSQILDNPAKVHREVPFSLLIPARQIFDVDEHETGKVLIHGIIDGYLETADGLTLFDYKTDHVKRPEDLKTRYAGQVKLYAAALASMYPGKVTKQYLYSLPQQVFVPVN</sequence>
<evidence type="ECO:0000255" key="1">
    <source>
        <dbReference type="HAMAP-Rule" id="MF_01451"/>
    </source>
</evidence>
<name>ADDA_LACPL</name>
<accession>Q88U41</accession>
<accession>F9URH6</accession>
<dbReference type="EC" id="3.1.-.-" evidence="1"/>
<dbReference type="EC" id="5.6.2.4" evidence="1"/>
<dbReference type="EMBL" id="AL935263">
    <property type="protein sequence ID" value="CCC79815.1"/>
    <property type="molecule type" value="Genomic_DNA"/>
</dbReference>
<dbReference type="RefSeq" id="WP_011101882.1">
    <property type="nucleotide sequence ID" value="NC_004567.2"/>
</dbReference>
<dbReference type="RefSeq" id="YP_004890329.1">
    <property type="nucleotide sequence ID" value="NC_004567.2"/>
</dbReference>
<dbReference type="SMR" id="Q88U41"/>
<dbReference type="STRING" id="220668.lp_2693"/>
<dbReference type="EnsemblBacteria" id="CCC79815">
    <property type="protein sequence ID" value="CCC79815"/>
    <property type="gene ID" value="lp_2693"/>
</dbReference>
<dbReference type="KEGG" id="lpl:lp_2693"/>
<dbReference type="PATRIC" id="fig|220668.9.peg.2254"/>
<dbReference type="eggNOG" id="COG1074">
    <property type="taxonomic scope" value="Bacteria"/>
</dbReference>
<dbReference type="HOGENOM" id="CLU_001114_3_1_9"/>
<dbReference type="OrthoDB" id="9810135at2"/>
<dbReference type="PhylomeDB" id="Q88U41"/>
<dbReference type="Proteomes" id="UP000000432">
    <property type="component" value="Chromosome"/>
</dbReference>
<dbReference type="GO" id="GO:0005829">
    <property type="term" value="C:cytosol"/>
    <property type="evidence" value="ECO:0007669"/>
    <property type="project" value="TreeGrafter"/>
</dbReference>
<dbReference type="GO" id="GO:0033202">
    <property type="term" value="C:DNA helicase complex"/>
    <property type="evidence" value="ECO:0007669"/>
    <property type="project" value="TreeGrafter"/>
</dbReference>
<dbReference type="GO" id="GO:0043138">
    <property type="term" value="F:3'-5' DNA helicase activity"/>
    <property type="evidence" value="ECO:0007669"/>
    <property type="project" value="UniProtKB-UniRule"/>
</dbReference>
<dbReference type="GO" id="GO:0008408">
    <property type="term" value="F:3'-5' exonuclease activity"/>
    <property type="evidence" value="ECO:0007669"/>
    <property type="project" value="UniProtKB-UniRule"/>
</dbReference>
<dbReference type="GO" id="GO:0005524">
    <property type="term" value="F:ATP binding"/>
    <property type="evidence" value="ECO:0007669"/>
    <property type="project" value="UniProtKB-UniRule"/>
</dbReference>
<dbReference type="GO" id="GO:0016887">
    <property type="term" value="F:ATP hydrolysis activity"/>
    <property type="evidence" value="ECO:0007669"/>
    <property type="project" value="RHEA"/>
</dbReference>
<dbReference type="GO" id="GO:0003690">
    <property type="term" value="F:double-stranded DNA binding"/>
    <property type="evidence" value="ECO:0007669"/>
    <property type="project" value="UniProtKB-UniRule"/>
</dbReference>
<dbReference type="GO" id="GO:0000724">
    <property type="term" value="P:double-strand break repair via homologous recombination"/>
    <property type="evidence" value="ECO:0007669"/>
    <property type="project" value="UniProtKB-UniRule"/>
</dbReference>
<dbReference type="CDD" id="cd17932">
    <property type="entry name" value="DEXQc_UvrD"/>
    <property type="match status" value="1"/>
</dbReference>
<dbReference type="Gene3D" id="3.90.320.10">
    <property type="match status" value="1"/>
</dbReference>
<dbReference type="Gene3D" id="6.10.250.2380">
    <property type="match status" value="1"/>
</dbReference>
<dbReference type="Gene3D" id="3.40.50.300">
    <property type="entry name" value="P-loop containing nucleotide triphosphate hydrolases"/>
    <property type="match status" value="4"/>
</dbReference>
<dbReference type="HAMAP" id="MF_01451">
    <property type="entry name" value="AddA"/>
    <property type="match status" value="1"/>
</dbReference>
<dbReference type="InterPro" id="IPR014152">
    <property type="entry name" value="AddA"/>
</dbReference>
<dbReference type="InterPro" id="IPR014017">
    <property type="entry name" value="DNA_helicase_UvrD-like_C"/>
</dbReference>
<dbReference type="InterPro" id="IPR000212">
    <property type="entry name" value="DNA_helicase_UvrD/REP"/>
</dbReference>
<dbReference type="InterPro" id="IPR027417">
    <property type="entry name" value="P-loop_NTPase"/>
</dbReference>
<dbReference type="InterPro" id="IPR011604">
    <property type="entry name" value="PDDEXK-like_dom_sf"/>
</dbReference>
<dbReference type="InterPro" id="IPR038726">
    <property type="entry name" value="PDDEXK_AddAB-type"/>
</dbReference>
<dbReference type="InterPro" id="IPR011335">
    <property type="entry name" value="Restrct_endonuc-II-like"/>
</dbReference>
<dbReference type="InterPro" id="IPR014016">
    <property type="entry name" value="UvrD-like_ATP-bd"/>
</dbReference>
<dbReference type="NCBIfam" id="TIGR02785">
    <property type="entry name" value="addA_Gpos"/>
    <property type="match status" value="1"/>
</dbReference>
<dbReference type="PANTHER" id="PTHR11070:SF48">
    <property type="entry name" value="ATP-DEPENDENT HELICASE_NUCLEASE SUBUNIT A"/>
    <property type="match status" value="1"/>
</dbReference>
<dbReference type="PANTHER" id="PTHR11070">
    <property type="entry name" value="UVRD / RECB / PCRA DNA HELICASE FAMILY MEMBER"/>
    <property type="match status" value="1"/>
</dbReference>
<dbReference type="Pfam" id="PF12705">
    <property type="entry name" value="PDDEXK_1"/>
    <property type="match status" value="1"/>
</dbReference>
<dbReference type="Pfam" id="PF00580">
    <property type="entry name" value="UvrD-helicase"/>
    <property type="match status" value="1"/>
</dbReference>
<dbReference type="Pfam" id="PF13361">
    <property type="entry name" value="UvrD_C"/>
    <property type="match status" value="1"/>
</dbReference>
<dbReference type="SUPFAM" id="SSF52540">
    <property type="entry name" value="P-loop containing nucleoside triphosphate hydrolases"/>
    <property type="match status" value="1"/>
</dbReference>
<dbReference type="SUPFAM" id="SSF52980">
    <property type="entry name" value="Restriction endonuclease-like"/>
    <property type="match status" value="1"/>
</dbReference>
<dbReference type="PROSITE" id="PS51198">
    <property type="entry name" value="UVRD_HELICASE_ATP_BIND"/>
    <property type="match status" value="1"/>
</dbReference>
<dbReference type="PROSITE" id="PS51217">
    <property type="entry name" value="UVRD_HELICASE_CTER"/>
    <property type="match status" value="1"/>
</dbReference>
<reference key="1">
    <citation type="journal article" date="2003" name="Proc. Natl. Acad. Sci. U.S.A.">
        <title>Complete genome sequence of Lactobacillus plantarum WCFS1.</title>
        <authorList>
            <person name="Kleerebezem M."/>
            <person name="Boekhorst J."/>
            <person name="van Kranenburg R."/>
            <person name="Molenaar D."/>
            <person name="Kuipers O.P."/>
            <person name="Leer R."/>
            <person name="Tarchini R."/>
            <person name="Peters S.A."/>
            <person name="Sandbrink H.M."/>
            <person name="Fiers M.W.E.J."/>
            <person name="Stiekema W."/>
            <person name="Klein Lankhorst R.M."/>
            <person name="Bron P.A."/>
            <person name="Hoffer S.M."/>
            <person name="Nierop Groot M.N."/>
            <person name="Kerkhoven R."/>
            <person name="De Vries M."/>
            <person name="Ursing B."/>
            <person name="De Vos W.M."/>
            <person name="Siezen R.J."/>
        </authorList>
    </citation>
    <scope>NUCLEOTIDE SEQUENCE [LARGE SCALE GENOMIC DNA]</scope>
    <source>
        <strain>ATCC BAA-793 / NCIMB 8826 / WCFS1</strain>
    </source>
</reference>
<reference key="2">
    <citation type="journal article" date="2012" name="J. Bacteriol.">
        <title>Complete resequencing and reannotation of the Lactobacillus plantarum WCFS1 genome.</title>
        <authorList>
            <person name="Siezen R.J."/>
            <person name="Francke C."/>
            <person name="Renckens B."/>
            <person name="Boekhorst J."/>
            <person name="Wels M."/>
            <person name="Kleerebezem M."/>
            <person name="van Hijum S.A."/>
        </authorList>
    </citation>
    <scope>NUCLEOTIDE SEQUENCE [LARGE SCALE GENOMIC DNA]</scope>
    <scope>GENOME REANNOTATION</scope>
    <source>
        <strain>ATCC BAA-793 / NCIMB 8826 / WCFS1</strain>
    </source>
</reference>